<protein>
    <recommendedName>
        <fullName evidence="1">Large ribosomal subunit protein uL1</fullName>
    </recommendedName>
    <alternativeName>
        <fullName evidence="2">50S ribosomal protein L1</fullName>
    </alternativeName>
</protein>
<keyword id="KW-0678">Repressor</keyword>
<keyword id="KW-0687">Ribonucleoprotein</keyword>
<keyword id="KW-0689">Ribosomal protein</keyword>
<keyword id="KW-0694">RNA-binding</keyword>
<keyword id="KW-0699">rRNA-binding</keyword>
<keyword id="KW-0810">Translation regulation</keyword>
<keyword id="KW-0820">tRNA-binding</keyword>
<dbReference type="EMBL" id="CP000384">
    <property type="protein sequence ID" value="ABG07039.1"/>
    <property type="molecule type" value="Genomic_DNA"/>
</dbReference>
<dbReference type="SMR" id="Q1BDJ5"/>
<dbReference type="KEGG" id="mmc:Mmcs_0924"/>
<dbReference type="HOGENOM" id="CLU_062853_0_0_11"/>
<dbReference type="BioCyc" id="MSP164756:G1G6O-948-MONOMER"/>
<dbReference type="GO" id="GO:0015934">
    <property type="term" value="C:large ribosomal subunit"/>
    <property type="evidence" value="ECO:0007669"/>
    <property type="project" value="InterPro"/>
</dbReference>
<dbReference type="GO" id="GO:0019843">
    <property type="term" value="F:rRNA binding"/>
    <property type="evidence" value="ECO:0007669"/>
    <property type="project" value="UniProtKB-UniRule"/>
</dbReference>
<dbReference type="GO" id="GO:0003735">
    <property type="term" value="F:structural constituent of ribosome"/>
    <property type="evidence" value="ECO:0007669"/>
    <property type="project" value="InterPro"/>
</dbReference>
<dbReference type="GO" id="GO:0000049">
    <property type="term" value="F:tRNA binding"/>
    <property type="evidence" value="ECO:0007669"/>
    <property type="project" value="UniProtKB-KW"/>
</dbReference>
<dbReference type="GO" id="GO:0006417">
    <property type="term" value="P:regulation of translation"/>
    <property type="evidence" value="ECO:0007669"/>
    <property type="project" value="UniProtKB-KW"/>
</dbReference>
<dbReference type="GO" id="GO:0006412">
    <property type="term" value="P:translation"/>
    <property type="evidence" value="ECO:0007669"/>
    <property type="project" value="UniProtKB-UniRule"/>
</dbReference>
<dbReference type="CDD" id="cd00403">
    <property type="entry name" value="Ribosomal_L1"/>
    <property type="match status" value="1"/>
</dbReference>
<dbReference type="FunFam" id="3.40.50.790:FF:000001">
    <property type="entry name" value="50S ribosomal protein L1"/>
    <property type="match status" value="1"/>
</dbReference>
<dbReference type="Gene3D" id="3.30.190.20">
    <property type="match status" value="1"/>
</dbReference>
<dbReference type="Gene3D" id="3.40.50.790">
    <property type="match status" value="1"/>
</dbReference>
<dbReference type="HAMAP" id="MF_01318_B">
    <property type="entry name" value="Ribosomal_uL1_B"/>
    <property type="match status" value="1"/>
</dbReference>
<dbReference type="InterPro" id="IPR005878">
    <property type="entry name" value="Ribosom_uL1_bac-type"/>
</dbReference>
<dbReference type="InterPro" id="IPR002143">
    <property type="entry name" value="Ribosomal_uL1"/>
</dbReference>
<dbReference type="InterPro" id="IPR023674">
    <property type="entry name" value="Ribosomal_uL1-like"/>
</dbReference>
<dbReference type="InterPro" id="IPR028364">
    <property type="entry name" value="Ribosomal_uL1/biogenesis"/>
</dbReference>
<dbReference type="InterPro" id="IPR016095">
    <property type="entry name" value="Ribosomal_uL1_3-a/b-sand"/>
</dbReference>
<dbReference type="InterPro" id="IPR023673">
    <property type="entry name" value="Ribosomal_uL1_CS"/>
</dbReference>
<dbReference type="NCBIfam" id="TIGR01169">
    <property type="entry name" value="rplA_bact"/>
    <property type="match status" value="1"/>
</dbReference>
<dbReference type="PANTHER" id="PTHR36427">
    <property type="entry name" value="54S RIBOSOMAL PROTEIN L1, MITOCHONDRIAL"/>
    <property type="match status" value="1"/>
</dbReference>
<dbReference type="PANTHER" id="PTHR36427:SF3">
    <property type="entry name" value="LARGE RIBOSOMAL SUBUNIT PROTEIN UL1M"/>
    <property type="match status" value="1"/>
</dbReference>
<dbReference type="Pfam" id="PF00687">
    <property type="entry name" value="Ribosomal_L1"/>
    <property type="match status" value="1"/>
</dbReference>
<dbReference type="PIRSF" id="PIRSF002155">
    <property type="entry name" value="Ribosomal_L1"/>
    <property type="match status" value="1"/>
</dbReference>
<dbReference type="SUPFAM" id="SSF56808">
    <property type="entry name" value="Ribosomal protein L1"/>
    <property type="match status" value="1"/>
</dbReference>
<dbReference type="PROSITE" id="PS01199">
    <property type="entry name" value="RIBOSOMAL_L1"/>
    <property type="match status" value="1"/>
</dbReference>
<comment type="function">
    <text evidence="1">Binds directly to 23S rRNA. The L1 stalk is quite mobile in the ribosome, and is involved in E site tRNA release.</text>
</comment>
<comment type="function">
    <text evidence="1">Protein L1 is also a translational repressor protein, it controls the translation of the L11 operon by binding to its mRNA.</text>
</comment>
<comment type="subunit">
    <text evidence="1">Part of the 50S ribosomal subunit.</text>
</comment>
<comment type="similarity">
    <text evidence="1">Belongs to the universal ribosomal protein uL1 family.</text>
</comment>
<gene>
    <name evidence="1" type="primary">rplA</name>
    <name type="ordered locus">Mmcs_0924</name>
</gene>
<name>RL1_MYCSS</name>
<sequence>MSKNSKAYREAAEKVDKTKLYSPLEAAKLAKETSSKKQDATVEVAIRLGVDPRKADQMVRGTVNLPHGTGKTARVAVFAVGDKAEQAAAAGADIVGSDDLIEQIQGGMLDFDAAIATPDQMAKVGRIARILGPRGLMPNPKTGTVTADVAKAVSDIKGGKINFRVDKQANLHIVIGKASFDEKKLAENYGAALDEILRAKPSASKGRYLKKIVVSTTTGPGIPVDPQVTRNFAEA</sequence>
<evidence type="ECO:0000255" key="1">
    <source>
        <dbReference type="HAMAP-Rule" id="MF_01318"/>
    </source>
</evidence>
<evidence type="ECO:0000305" key="2"/>
<accession>Q1BDJ5</accession>
<feature type="chain" id="PRO_0000308054" description="Large ribosomal subunit protein uL1">
    <location>
        <begin position="1"/>
        <end position="235"/>
    </location>
</feature>
<reference key="1">
    <citation type="submission" date="2006-06" db="EMBL/GenBank/DDBJ databases">
        <title>Complete sequence of chromosome of Mycobacterium sp. MCS.</title>
        <authorList>
            <consortium name="US DOE Joint Genome Institute"/>
            <person name="Copeland A."/>
            <person name="Lucas S."/>
            <person name="Lapidus A."/>
            <person name="Barry K."/>
            <person name="Detter J.C."/>
            <person name="Glavina del Rio T."/>
            <person name="Hammon N."/>
            <person name="Israni S."/>
            <person name="Dalin E."/>
            <person name="Tice H."/>
            <person name="Pitluck S."/>
            <person name="Martinez M."/>
            <person name="Schmutz J."/>
            <person name="Larimer F."/>
            <person name="Land M."/>
            <person name="Hauser L."/>
            <person name="Kyrpides N."/>
            <person name="Kim E."/>
            <person name="Miller C.D."/>
            <person name="Hughes J.E."/>
            <person name="Anderson A.J."/>
            <person name="Sims R.C."/>
            <person name="Richardson P."/>
        </authorList>
    </citation>
    <scope>NUCLEOTIDE SEQUENCE [LARGE SCALE GENOMIC DNA]</scope>
    <source>
        <strain>MCS</strain>
    </source>
</reference>
<proteinExistence type="inferred from homology"/>
<organism>
    <name type="scientific">Mycobacterium sp. (strain MCS)</name>
    <dbReference type="NCBI Taxonomy" id="164756"/>
    <lineage>
        <taxon>Bacteria</taxon>
        <taxon>Bacillati</taxon>
        <taxon>Actinomycetota</taxon>
        <taxon>Actinomycetes</taxon>
        <taxon>Mycobacteriales</taxon>
        <taxon>Mycobacteriaceae</taxon>
        <taxon>Mycobacterium</taxon>
    </lineage>
</organism>